<dbReference type="EC" id="3.1.-.-"/>
<dbReference type="EMBL" id="CU329670">
    <property type="protein sequence ID" value="CAB76270.1"/>
    <property type="molecule type" value="Genomic_DNA"/>
</dbReference>
<dbReference type="PIR" id="T50098">
    <property type="entry name" value="T50098"/>
</dbReference>
<dbReference type="RefSeq" id="NP_594715.1">
    <property type="nucleotide sequence ID" value="NM_001020142.1"/>
</dbReference>
<dbReference type="SMR" id="Q9P7H2"/>
<dbReference type="BioGRID" id="278641">
    <property type="interactions" value="34"/>
</dbReference>
<dbReference type="FunCoup" id="Q9P7H2">
    <property type="interactions" value="334"/>
</dbReference>
<dbReference type="STRING" id="284812.Q9P7H2"/>
<dbReference type="iPTMnet" id="Q9P7H2"/>
<dbReference type="PaxDb" id="4896-SPAC1782.08c.1"/>
<dbReference type="EnsemblFungi" id="SPAC1782.08c.1">
    <property type="protein sequence ID" value="SPAC1782.08c.1:pep"/>
    <property type="gene ID" value="SPAC1782.08c"/>
</dbReference>
<dbReference type="GeneID" id="2542165"/>
<dbReference type="KEGG" id="spo:2542165"/>
<dbReference type="PomBase" id="SPAC1782.08c">
    <property type="gene designation" value="rex3"/>
</dbReference>
<dbReference type="VEuPathDB" id="FungiDB:SPAC1782.08c"/>
<dbReference type="eggNOG" id="KOG2248">
    <property type="taxonomic scope" value="Eukaryota"/>
</dbReference>
<dbReference type="HOGENOM" id="CLU_022453_5_4_1"/>
<dbReference type="InParanoid" id="Q9P7H2"/>
<dbReference type="OMA" id="CELCYTT"/>
<dbReference type="PhylomeDB" id="Q9P7H2"/>
<dbReference type="PRO" id="PR:Q9P7H2"/>
<dbReference type="Proteomes" id="UP000002485">
    <property type="component" value="Chromosome I"/>
</dbReference>
<dbReference type="GO" id="GO:0005737">
    <property type="term" value="C:cytoplasm"/>
    <property type="evidence" value="ECO:0000266"/>
    <property type="project" value="PomBase"/>
</dbReference>
<dbReference type="GO" id="GO:0005634">
    <property type="term" value="C:nucleus"/>
    <property type="evidence" value="ECO:0007005"/>
    <property type="project" value="PomBase"/>
</dbReference>
<dbReference type="GO" id="GO:0000175">
    <property type="term" value="F:3'-5'-RNA exonuclease activity"/>
    <property type="evidence" value="ECO:0000303"/>
    <property type="project" value="PomBase"/>
</dbReference>
<dbReference type="GO" id="GO:0004527">
    <property type="term" value="F:exonuclease activity"/>
    <property type="evidence" value="ECO:0000318"/>
    <property type="project" value="GO_Central"/>
</dbReference>
<dbReference type="GO" id="GO:0003676">
    <property type="term" value="F:nucleic acid binding"/>
    <property type="evidence" value="ECO:0007669"/>
    <property type="project" value="InterPro"/>
</dbReference>
<dbReference type="GO" id="GO:0008270">
    <property type="term" value="F:zinc ion binding"/>
    <property type="evidence" value="ECO:0007669"/>
    <property type="project" value="UniProtKB-KW"/>
</dbReference>
<dbReference type="GO" id="GO:0000467">
    <property type="term" value="P:exonucleolytic trimming to generate mature 3'-end of 5.8S rRNA from tricistronic rRNA transcript (SSU-rRNA, 5.8S rRNA, LSU-rRNA)"/>
    <property type="evidence" value="ECO:0000266"/>
    <property type="project" value="PomBase"/>
</dbReference>
<dbReference type="GO" id="GO:0031125">
    <property type="term" value="P:rRNA 3'-end processing"/>
    <property type="evidence" value="ECO:0000318"/>
    <property type="project" value="GO_Central"/>
</dbReference>
<dbReference type="GO" id="GO:0034476">
    <property type="term" value="P:U5 snRNA 3'-end processing"/>
    <property type="evidence" value="ECO:0000266"/>
    <property type="project" value="PomBase"/>
</dbReference>
<dbReference type="CDD" id="cd06145">
    <property type="entry name" value="REX1_like"/>
    <property type="match status" value="1"/>
</dbReference>
<dbReference type="FunFam" id="3.30.420.10:FF:000031">
    <property type="entry name" value="RNA exonuclease 1"/>
    <property type="match status" value="1"/>
</dbReference>
<dbReference type="Gene3D" id="3.30.420.10">
    <property type="entry name" value="Ribonuclease H-like superfamily/Ribonuclease H"/>
    <property type="match status" value="1"/>
</dbReference>
<dbReference type="InterPro" id="IPR013520">
    <property type="entry name" value="Exonuclease_RNaseT/DNA_pol3"/>
</dbReference>
<dbReference type="InterPro" id="IPR034922">
    <property type="entry name" value="REX1-like_exo"/>
</dbReference>
<dbReference type="InterPro" id="IPR047021">
    <property type="entry name" value="REXO1/3/4-like"/>
</dbReference>
<dbReference type="InterPro" id="IPR012337">
    <property type="entry name" value="RNaseH-like_sf"/>
</dbReference>
<dbReference type="InterPro" id="IPR036397">
    <property type="entry name" value="RNaseH_sf"/>
</dbReference>
<dbReference type="InterPro" id="IPR000571">
    <property type="entry name" value="Znf_CCCH"/>
</dbReference>
<dbReference type="PANTHER" id="PTHR12801:SF115">
    <property type="entry name" value="FI18136P1-RELATED"/>
    <property type="match status" value="1"/>
</dbReference>
<dbReference type="PANTHER" id="PTHR12801">
    <property type="entry name" value="RNA EXONUCLEASE REXO1 / RECO3 FAMILY MEMBER-RELATED"/>
    <property type="match status" value="1"/>
</dbReference>
<dbReference type="Pfam" id="PF00929">
    <property type="entry name" value="RNase_T"/>
    <property type="match status" value="1"/>
</dbReference>
<dbReference type="SMART" id="SM00479">
    <property type="entry name" value="EXOIII"/>
    <property type="match status" value="1"/>
</dbReference>
<dbReference type="SUPFAM" id="SSF53098">
    <property type="entry name" value="Ribonuclease H-like"/>
    <property type="match status" value="1"/>
</dbReference>
<dbReference type="PROSITE" id="PS50103">
    <property type="entry name" value="ZF_C3H1"/>
    <property type="match status" value="1"/>
</dbReference>
<keyword id="KW-0963">Cytoplasm</keyword>
<keyword id="KW-0269">Exonuclease</keyword>
<keyword id="KW-0378">Hydrolase</keyword>
<keyword id="KW-0479">Metal-binding</keyword>
<keyword id="KW-0540">Nuclease</keyword>
<keyword id="KW-0539">Nucleus</keyword>
<keyword id="KW-1185">Reference proteome</keyword>
<keyword id="KW-0698">rRNA processing</keyword>
<keyword id="KW-0862">Zinc</keyword>
<keyword id="KW-0863">Zinc-finger</keyword>
<organism>
    <name type="scientific">Schizosaccharomyces pombe (strain 972 / ATCC 24843)</name>
    <name type="common">Fission yeast</name>
    <dbReference type="NCBI Taxonomy" id="284812"/>
    <lineage>
        <taxon>Eukaryota</taxon>
        <taxon>Fungi</taxon>
        <taxon>Dikarya</taxon>
        <taxon>Ascomycota</taxon>
        <taxon>Taphrinomycotina</taxon>
        <taxon>Schizosaccharomycetes</taxon>
        <taxon>Schizosaccharomycetales</taxon>
        <taxon>Schizosaccharomycetaceae</taxon>
        <taxon>Schizosaccharomyces</taxon>
    </lineage>
</organism>
<feature type="chain" id="PRO_0000120935" description="RNA exonuclease 3">
    <location>
        <begin position="1"/>
        <end position="540"/>
    </location>
</feature>
<feature type="domain" description="Exonuclease">
    <location>
        <begin position="382"/>
        <end position="529"/>
    </location>
</feature>
<feature type="zinc finger region" description="C3H1-type" evidence="2">
    <location>
        <begin position="7"/>
        <end position="34"/>
    </location>
</feature>
<gene>
    <name type="primary">rex3</name>
    <name type="ORF">SPAC1782.08c</name>
</gene>
<proteinExistence type="inferred from homology"/>
<comment type="function">
    <text evidence="1">3' to 5' exoribonuclease required for proper 3' end maturation of MRP RNA and of the U5L snRNA.</text>
</comment>
<comment type="subcellular location">
    <subcellularLocation>
        <location evidence="1">Cytoplasm</location>
    </subcellularLocation>
    <subcellularLocation>
        <location evidence="1">Nucleus</location>
    </subcellularLocation>
</comment>
<comment type="similarity">
    <text evidence="3">Belongs to the REXO1/REXO3 family.</text>
</comment>
<sequence>MFSPLGQFKHIVCPFLRTGRKCQSRNCFFSHDFQNSTKISPPYSENVEGYPKVKIEKSLPYKYDNCKLSICVPIVTTCIPYHSVENLNFNIRQNISTTLNLEKTNDSIKETKNENFRMDVLETYKCKQLNHQTTHLPTNTVLKKRSLFNDAISIVPNKKKQLVSAISTNSDSQGASSNIIPTPKYDSNSPAGHELRKRMTHLLYESYKDLGYSNAESSMLALLDEKNICETANSKMIYSSSCKSKILSLKKAPKKNEIQGSTPDEKLESLVHSEEELILWGYNIGDVAPVNPPDELRECDRCGTRFADPRGPCTYHWGKLFREKQGGEKIRTYTCCGVKEGDSSGCIIEDNHVFKYRHLPYLASVHPFSYLPDSTNSKQLSHCALDCELCYTTNGMELARLTVVAKESIIMDVFIKPKGKILSLNTRFSGIHDAKELESGITMDQMYIKIKELGMNKNTILIGHGLENDLNAMRLIHKRVIDTALLFTHARGPPFRYSLKYLTKKYLGTTIQTSTHDSEEDAVSALQLVFYKTKSNESQN</sequence>
<evidence type="ECO:0000250" key="1"/>
<evidence type="ECO:0000255" key="2">
    <source>
        <dbReference type="PROSITE-ProRule" id="PRU00723"/>
    </source>
</evidence>
<evidence type="ECO:0000305" key="3"/>
<reference key="1">
    <citation type="journal article" date="2002" name="Nature">
        <title>The genome sequence of Schizosaccharomyces pombe.</title>
        <authorList>
            <person name="Wood V."/>
            <person name="Gwilliam R."/>
            <person name="Rajandream M.A."/>
            <person name="Lyne M.H."/>
            <person name="Lyne R."/>
            <person name="Stewart A."/>
            <person name="Sgouros J.G."/>
            <person name="Peat N."/>
            <person name="Hayles J."/>
            <person name="Baker S.G."/>
            <person name="Basham D."/>
            <person name="Bowman S."/>
            <person name="Brooks K."/>
            <person name="Brown D."/>
            <person name="Brown S."/>
            <person name="Chillingworth T."/>
            <person name="Churcher C.M."/>
            <person name="Collins M."/>
            <person name="Connor R."/>
            <person name="Cronin A."/>
            <person name="Davis P."/>
            <person name="Feltwell T."/>
            <person name="Fraser A."/>
            <person name="Gentles S."/>
            <person name="Goble A."/>
            <person name="Hamlin N."/>
            <person name="Harris D.E."/>
            <person name="Hidalgo J."/>
            <person name="Hodgson G."/>
            <person name="Holroyd S."/>
            <person name="Hornsby T."/>
            <person name="Howarth S."/>
            <person name="Huckle E.J."/>
            <person name="Hunt S."/>
            <person name="Jagels K."/>
            <person name="James K.D."/>
            <person name="Jones L."/>
            <person name="Jones M."/>
            <person name="Leather S."/>
            <person name="McDonald S."/>
            <person name="McLean J."/>
            <person name="Mooney P."/>
            <person name="Moule S."/>
            <person name="Mungall K.L."/>
            <person name="Murphy L.D."/>
            <person name="Niblett D."/>
            <person name="Odell C."/>
            <person name="Oliver K."/>
            <person name="O'Neil S."/>
            <person name="Pearson D."/>
            <person name="Quail M.A."/>
            <person name="Rabbinowitsch E."/>
            <person name="Rutherford K.M."/>
            <person name="Rutter S."/>
            <person name="Saunders D."/>
            <person name="Seeger K."/>
            <person name="Sharp S."/>
            <person name="Skelton J."/>
            <person name="Simmonds M.N."/>
            <person name="Squares R."/>
            <person name="Squares S."/>
            <person name="Stevens K."/>
            <person name="Taylor K."/>
            <person name="Taylor R.G."/>
            <person name="Tivey A."/>
            <person name="Walsh S.V."/>
            <person name="Warren T."/>
            <person name="Whitehead S."/>
            <person name="Woodward J.R."/>
            <person name="Volckaert G."/>
            <person name="Aert R."/>
            <person name="Robben J."/>
            <person name="Grymonprez B."/>
            <person name="Weltjens I."/>
            <person name="Vanstreels E."/>
            <person name="Rieger M."/>
            <person name="Schaefer M."/>
            <person name="Mueller-Auer S."/>
            <person name="Gabel C."/>
            <person name="Fuchs M."/>
            <person name="Duesterhoeft A."/>
            <person name="Fritzc C."/>
            <person name="Holzer E."/>
            <person name="Moestl D."/>
            <person name="Hilbert H."/>
            <person name="Borzym K."/>
            <person name="Langer I."/>
            <person name="Beck A."/>
            <person name="Lehrach H."/>
            <person name="Reinhardt R."/>
            <person name="Pohl T.M."/>
            <person name="Eger P."/>
            <person name="Zimmermann W."/>
            <person name="Wedler H."/>
            <person name="Wambutt R."/>
            <person name="Purnelle B."/>
            <person name="Goffeau A."/>
            <person name="Cadieu E."/>
            <person name="Dreano S."/>
            <person name="Gloux S."/>
            <person name="Lelaure V."/>
            <person name="Mottier S."/>
            <person name="Galibert F."/>
            <person name="Aves S.J."/>
            <person name="Xiang Z."/>
            <person name="Hunt C."/>
            <person name="Moore K."/>
            <person name="Hurst S.M."/>
            <person name="Lucas M."/>
            <person name="Rochet M."/>
            <person name="Gaillardin C."/>
            <person name="Tallada V.A."/>
            <person name="Garzon A."/>
            <person name="Thode G."/>
            <person name="Daga R.R."/>
            <person name="Cruzado L."/>
            <person name="Jimenez J."/>
            <person name="Sanchez M."/>
            <person name="del Rey F."/>
            <person name="Benito J."/>
            <person name="Dominguez A."/>
            <person name="Revuelta J.L."/>
            <person name="Moreno S."/>
            <person name="Armstrong J."/>
            <person name="Forsburg S.L."/>
            <person name="Cerutti L."/>
            <person name="Lowe T."/>
            <person name="McCombie W.R."/>
            <person name="Paulsen I."/>
            <person name="Potashkin J."/>
            <person name="Shpakovski G.V."/>
            <person name="Ussery D."/>
            <person name="Barrell B.G."/>
            <person name="Nurse P."/>
        </authorList>
    </citation>
    <scope>NUCLEOTIDE SEQUENCE [LARGE SCALE GENOMIC DNA]</scope>
    <source>
        <strain>972 / ATCC 24843</strain>
    </source>
</reference>
<accession>Q9P7H2</accession>
<protein>
    <recommendedName>
        <fullName>RNA exonuclease 3</fullName>
        <ecNumber>3.1.-.-</ecNumber>
    </recommendedName>
</protein>
<name>REXO3_SCHPO</name>